<comment type="function">
    <text evidence="1">One of the primary rRNA binding proteins, it binds directly to 16S rRNA where it helps nucleate assembly of the platform of the 30S subunit by binding and bridging several RNA helices of the 16S rRNA.</text>
</comment>
<comment type="function">
    <text evidence="1">Forms an intersubunit bridge (bridge B4) with the 23S rRNA of the 50S subunit in the ribosome.</text>
</comment>
<comment type="subunit">
    <text evidence="1">Part of the 30S ribosomal subunit. Forms a bridge to the 50S subunit in the 70S ribosome, contacting the 23S rRNA.</text>
</comment>
<comment type="similarity">
    <text evidence="1">Belongs to the universal ribosomal protein uS15 family.</text>
</comment>
<gene>
    <name evidence="1" type="primary">rpsO</name>
    <name type="ordered locus">SA1116</name>
</gene>
<keyword id="KW-0687">Ribonucleoprotein</keyword>
<keyword id="KW-0689">Ribosomal protein</keyword>
<keyword id="KW-0694">RNA-binding</keyword>
<keyword id="KW-0699">rRNA-binding</keyword>
<feature type="chain" id="PRO_0000115544" description="Small ribosomal subunit protein uS15">
    <location>
        <begin position="1"/>
        <end position="89"/>
    </location>
</feature>
<evidence type="ECO:0000255" key="1">
    <source>
        <dbReference type="HAMAP-Rule" id="MF_01343"/>
    </source>
</evidence>
<evidence type="ECO:0000305" key="2"/>
<sequence length="89" mass="10608">MAISQERKNEIIKEYRVHETDTGSPEVQIAVLTAEINAVNEHLRTHKKDHHSRRGLLKMVGRRRHLLNYLRSKDIQRYRELIKSLGIRR</sequence>
<organism>
    <name type="scientific">Staphylococcus aureus (strain N315)</name>
    <dbReference type="NCBI Taxonomy" id="158879"/>
    <lineage>
        <taxon>Bacteria</taxon>
        <taxon>Bacillati</taxon>
        <taxon>Bacillota</taxon>
        <taxon>Bacilli</taxon>
        <taxon>Bacillales</taxon>
        <taxon>Staphylococcaceae</taxon>
        <taxon>Staphylococcus</taxon>
    </lineage>
</organism>
<dbReference type="EMBL" id="BA000018">
    <property type="protein sequence ID" value="BAB42368.1"/>
    <property type="molecule type" value="Genomic_DNA"/>
</dbReference>
<dbReference type="PIR" id="D89901">
    <property type="entry name" value="D89901"/>
</dbReference>
<dbReference type="RefSeq" id="WP_001018328.1">
    <property type="nucleotide sequence ID" value="NC_002745.2"/>
</dbReference>
<dbReference type="SMR" id="Q7A5X8"/>
<dbReference type="EnsemblBacteria" id="BAB42368">
    <property type="protein sequence ID" value="BAB42368"/>
    <property type="gene ID" value="BAB42368"/>
</dbReference>
<dbReference type="KEGG" id="sau:SA1116"/>
<dbReference type="HOGENOM" id="CLU_148518_0_0_9"/>
<dbReference type="GO" id="GO:0022627">
    <property type="term" value="C:cytosolic small ribosomal subunit"/>
    <property type="evidence" value="ECO:0007669"/>
    <property type="project" value="TreeGrafter"/>
</dbReference>
<dbReference type="GO" id="GO:0019843">
    <property type="term" value="F:rRNA binding"/>
    <property type="evidence" value="ECO:0007669"/>
    <property type="project" value="UniProtKB-UniRule"/>
</dbReference>
<dbReference type="GO" id="GO:0003735">
    <property type="term" value="F:structural constituent of ribosome"/>
    <property type="evidence" value="ECO:0007669"/>
    <property type="project" value="InterPro"/>
</dbReference>
<dbReference type="GO" id="GO:0006412">
    <property type="term" value="P:translation"/>
    <property type="evidence" value="ECO:0007669"/>
    <property type="project" value="UniProtKB-UniRule"/>
</dbReference>
<dbReference type="CDD" id="cd00353">
    <property type="entry name" value="Ribosomal_S15p_S13e"/>
    <property type="match status" value="1"/>
</dbReference>
<dbReference type="FunFam" id="1.10.287.10:FF:000002">
    <property type="entry name" value="30S ribosomal protein S15"/>
    <property type="match status" value="1"/>
</dbReference>
<dbReference type="Gene3D" id="6.10.250.3130">
    <property type="match status" value="1"/>
</dbReference>
<dbReference type="Gene3D" id="1.10.287.10">
    <property type="entry name" value="S15/NS1, RNA-binding"/>
    <property type="match status" value="1"/>
</dbReference>
<dbReference type="HAMAP" id="MF_01343_B">
    <property type="entry name" value="Ribosomal_uS15_B"/>
    <property type="match status" value="1"/>
</dbReference>
<dbReference type="InterPro" id="IPR000589">
    <property type="entry name" value="Ribosomal_uS15"/>
</dbReference>
<dbReference type="InterPro" id="IPR005290">
    <property type="entry name" value="Ribosomal_uS15_bac-type"/>
</dbReference>
<dbReference type="InterPro" id="IPR009068">
    <property type="entry name" value="uS15_NS1_RNA-bd_sf"/>
</dbReference>
<dbReference type="NCBIfam" id="TIGR00952">
    <property type="entry name" value="S15_bact"/>
    <property type="match status" value="1"/>
</dbReference>
<dbReference type="PANTHER" id="PTHR23321">
    <property type="entry name" value="RIBOSOMAL PROTEIN S15, BACTERIAL AND ORGANELLAR"/>
    <property type="match status" value="1"/>
</dbReference>
<dbReference type="PANTHER" id="PTHR23321:SF26">
    <property type="entry name" value="SMALL RIBOSOMAL SUBUNIT PROTEIN US15M"/>
    <property type="match status" value="1"/>
</dbReference>
<dbReference type="Pfam" id="PF00312">
    <property type="entry name" value="Ribosomal_S15"/>
    <property type="match status" value="1"/>
</dbReference>
<dbReference type="SMART" id="SM01387">
    <property type="entry name" value="Ribosomal_S15"/>
    <property type="match status" value="1"/>
</dbReference>
<dbReference type="SUPFAM" id="SSF47060">
    <property type="entry name" value="S15/NS1 RNA-binding domain"/>
    <property type="match status" value="1"/>
</dbReference>
<dbReference type="PROSITE" id="PS00362">
    <property type="entry name" value="RIBOSOMAL_S15"/>
    <property type="match status" value="1"/>
</dbReference>
<name>RS15_STAAN</name>
<protein>
    <recommendedName>
        <fullName evidence="1">Small ribosomal subunit protein uS15</fullName>
    </recommendedName>
    <alternativeName>
        <fullName evidence="2">30S ribosomal protein S15</fullName>
    </alternativeName>
</protein>
<reference key="1">
    <citation type="journal article" date="2001" name="Lancet">
        <title>Whole genome sequencing of meticillin-resistant Staphylococcus aureus.</title>
        <authorList>
            <person name="Kuroda M."/>
            <person name="Ohta T."/>
            <person name="Uchiyama I."/>
            <person name="Baba T."/>
            <person name="Yuzawa H."/>
            <person name="Kobayashi I."/>
            <person name="Cui L."/>
            <person name="Oguchi A."/>
            <person name="Aoki K."/>
            <person name="Nagai Y."/>
            <person name="Lian J.-Q."/>
            <person name="Ito T."/>
            <person name="Kanamori M."/>
            <person name="Matsumaru H."/>
            <person name="Maruyama A."/>
            <person name="Murakami H."/>
            <person name="Hosoyama A."/>
            <person name="Mizutani-Ui Y."/>
            <person name="Takahashi N.K."/>
            <person name="Sawano T."/>
            <person name="Inoue R."/>
            <person name="Kaito C."/>
            <person name="Sekimizu K."/>
            <person name="Hirakawa H."/>
            <person name="Kuhara S."/>
            <person name="Goto S."/>
            <person name="Yabuzaki J."/>
            <person name="Kanehisa M."/>
            <person name="Yamashita A."/>
            <person name="Oshima K."/>
            <person name="Furuya K."/>
            <person name="Yoshino C."/>
            <person name="Shiba T."/>
            <person name="Hattori M."/>
            <person name="Ogasawara N."/>
            <person name="Hayashi H."/>
            <person name="Hiramatsu K."/>
        </authorList>
    </citation>
    <scope>NUCLEOTIDE SEQUENCE [LARGE SCALE GENOMIC DNA]</scope>
    <source>
        <strain>N315</strain>
    </source>
</reference>
<reference key="2">
    <citation type="submission" date="2007-10" db="UniProtKB">
        <title>Shotgun proteomic analysis of total and membrane protein extracts of S. aureus strain N315.</title>
        <authorList>
            <person name="Vaezzadeh A.R."/>
            <person name="Deshusses J."/>
            <person name="Lescuyer P."/>
            <person name="Hochstrasser D.F."/>
        </authorList>
    </citation>
    <scope>IDENTIFICATION BY MASS SPECTROMETRY [LARGE SCALE ANALYSIS]</scope>
    <source>
        <strain>N315</strain>
    </source>
</reference>
<accession>Q7A5X8</accession>
<proteinExistence type="evidence at protein level"/>